<proteinExistence type="inferred from homology"/>
<organism>
    <name type="scientific">Saccharomyces cerevisiae (strain RM11-1a)</name>
    <name type="common">Baker's yeast</name>
    <dbReference type="NCBI Taxonomy" id="285006"/>
    <lineage>
        <taxon>Eukaryota</taxon>
        <taxon>Fungi</taxon>
        <taxon>Dikarya</taxon>
        <taxon>Ascomycota</taxon>
        <taxon>Saccharomycotina</taxon>
        <taxon>Saccharomycetes</taxon>
        <taxon>Saccharomycetales</taxon>
        <taxon>Saccharomycetaceae</taxon>
        <taxon>Saccharomyces</taxon>
    </lineage>
</organism>
<sequence length="249" mass="27688">MIYTSSKSLQYLAVPIYTIFKNLTIILIAYGEVLFFGGKVTSMELTSFIMMVLSSVVATWGDQQAIAIKASSLEDLDQELVESTIFVLNPGYLWMFTNCISSALFVLIMRKRIRLTNFKDYDTMFYNNVLALPLLLVFSFIMEDWSTKNLSVNLSADSLAAMVISGLMSVGISYCSGWCVRVTSSTTYSMVGALNKLPIALAGLVFFDAPKNFLSFFSIFLGFLSGLLYAVAKQKKIQQQKVLAATLEK</sequence>
<keyword id="KW-0968">Cytoplasmic vesicle</keyword>
<keyword id="KW-0256">Endoplasmic reticulum</keyword>
<keyword id="KW-0325">Glycoprotein</keyword>
<keyword id="KW-0333">Golgi apparatus</keyword>
<keyword id="KW-0472">Membrane</keyword>
<keyword id="KW-0762">Sugar transport</keyword>
<keyword id="KW-0812">Transmembrane</keyword>
<keyword id="KW-1133">Transmembrane helix</keyword>
<keyword id="KW-0813">Transport</keyword>
<comment type="function">
    <text evidence="1">Involved in the import of GDP-mannose from the cytoplasm into the Golgi lumen.</text>
</comment>
<comment type="subcellular location">
    <subcellularLocation>
        <location evidence="1">Golgi apparatus membrane</location>
        <topology evidence="1">Multi-pass membrane protein</topology>
    </subcellularLocation>
    <subcellularLocation>
        <location evidence="1">Cytoplasmic vesicle membrane</location>
        <topology evidence="1">Multi-pass membrane protein</topology>
    </subcellularLocation>
    <subcellularLocation>
        <location evidence="1">Endoplasmic reticulum membrane</location>
        <topology evidence="1">Multi-pass membrane protein</topology>
    </subcellularLocation>
    <text evidence="1">Recycles between the Golgi apparatus and the endoplasmic reticulum.</text>
</comment>
<comment type="similarity">
    <text evidence="3">Belongs to the TPT transporter family. SLC35D subfamily.</text>
</comment>
<comment type="caution">
    <text evidence="3">This is a truncated version of GDP-mannose transporter 2. This strain has a stop codon in position 73, which disrupts the gene coding for this protein and produces two ORFs. A contiguous sequence for GDP-mannose transporter 2 can be found in strain Lalvin EC1118 (AC C8Z742).</text>
</comment>
<dbReference type="EMBL" id="CH408052">
    <property type="protein sequence ID" value="EDV08867.1"/>
    <property type="molecule type" value="Genomic_DNA"/>
</dbReference>
<dbReference type="SMR" id="B3LS51"/>
<dbReference type="GlyCosmos" id="B3LS51">
    <property type="glycosylation" value="2 sites, No reported glycans"/>
</dbReference>
<dbReference type="HOGENOM" id="CLU_025360_1_1_1"/>
<dbReference type="OrthoDB" id="3994at4893"/>
<dbReference type="Proteomes" id="UP000008335">
    <property type="component" value="Unassembled WGS sequence"/>
</dbReference>
<dbReference type="GO" id="GO:0030659">
    <property type="term" value="C:cytoplasmic vesicle membrane"/>
    <property type="evidence" value="ECO:0007669"/>
    <property type="project" value="UniProtKB-SubCell"/>
</dbReference>
<dbReference type="GO" id="GO:0005789">
    <property type="term" value="C:endoplasmic reticulum membrane"/>
    <property type="evidence" value="ECO:0007669"/>
    <property type="project" value="UniProtKB-SubCell"/>
</dbReference>
<dbReference type="GO" id="GO:0000139">
    <property type="term" value="C:Golgi membrane"/>
    <property type="evidence" value="ECO:0007669"/>
    <property type="project" value="UniProtKB-SubCell"/>
</dbReference>
<dbReference type="GO" id="GO:0055085">
    <property type="term" value="P:transmembrane transport"/>
    <property type="evidence" value="ECO:0007669"/>
    <property type="project" value="InterPro"/>
</dbReference>
<dbReference type="InterPro" id="IPR013657">
    <property type="entry name" value="SCL35B1-4/HUT1"/>
</dbReference>
<dbReference type="InterPro" id="IPR050186">
    <property type="entry name" value="TPT_transporter"/>
</dbReference>
<dbReference type="NCBIfam" id="TIGR00803">
    <property type="entry name" value="nst"/>
    <property type="match status" value="1"/>
</dbReference>
<dbReference type="PANTHER" id="PTHR11132">
    <property type="entry name" value="SOLUTE CARRIER FAMILY 35"/>
    <property type="match status" value="1"/>
</dbReference>
<dbReference type="Pfam" id="PF08449">
    <property type="entry name" value="UAA"/>
    <property type="match status" value="1"/>
</dbReference>
<dbReference type="SUPFAM" id="SSF103481">
    <property type="entry name" value="Multidrug resistance efflux transporter EmrE"/>
    <property type="match status" value="1"/>
</dbReference>
<accession>B3LS51</accession>
<feature type="chain" id="PRO_0000391669" description="Probable GDP-mannose transporter 2">
    <location>
        <begin position="1"/>
        <end position="249"/>
    </location>
</feature>
<feature type="topological domain" description="Lumenal" evidence="2">
    <location>
        <begin position="1"/>
        <end position="15"/>
    </location>
</feature>
<feature type="transmembrane region" description="Helical" evidence="2">
    <location>
        <begin position="16"/>
        <end position="36"/>
    </location>
</feature>
<feature type="topological domain" description="Cytoplasmic" evidence="2">
    <location>
        <begin position="37"/>
        <end position="47"/>
    </location>
</feature>
<feature type="transmembrane region" description="Helical" evidence="2">
    <location>
        <begin position="48"/>
        <end position="68"/>
    </location>
</feature>
<feature type="topological domain" description="Lumenal" evidence="2">
    <location>
        <begin position="69"/>
        <end position="84"/>
    </location>
</feature>
<feature type="transmembrane region" description="Helical" evidence="2">
    <location>
        <begin position="85"/>
        <end position="105"/>
    </location>
</feature>
<feature type="topological domain" description="Cytoplasmic" evidence="2">
    <location>
        <begin position="106"/>
        <end position="122"/>
    </location>
</feature>
<feature type="transmembrane region" description="Helical" evidence="2">
    <location>
        <begin position="123"/>
        <end position="143"/>
    </location>
</feature>
<feature type="topological domain" description="Lumenal" evidence="2">
    <location>
        <begin position="144"/>
        <end position="159"/>
    </location>
</feature>
<feature type="transmembrane region" description="Helical" evidence="2">
    <location>
        <begin position="160"/>
        <end position="180"/>
    </location>
</feature>
<feature type="topological domain" description="Cytoplasmic" evidence="2">
    <location>
        <begin position="181"/>
        <end position="186"/>
    </location>
</feature>
<feature type="transmembrane region" description="Helical" evidence="2">
    <location>
        <begin position="187"/>
        <end position="207"/>
    </location>
</feature>
<feature type="topological domain" description="Lumenal" evidence="2">
    <location>
        <begin position="208"/>
        <end position="211"/>
    </location>
</feature>
<feature type="transmembrane region" description="Helical" evidence="2">
    <location>
        <begin position="212"/>
        <end position="232"/>
    </location>
</feature>
<feature type="topological domain" description="Cytoplasmic" evidence="2">
    <location>
        <begin position="233"/>
        <end position="249"/>
    </location>
</feature>
<feature type="glycosylation site" description="N-linked (GlcNAc...) asparagine" evidence="2">
    <location>
        <position position="149"/>
    </location>
</feature>
<feature type="glycosylation site" description="N-linked (GlcNAc...) asparagine" evidence="2">
    <location>
        <position position="153"/>
    </location>
</feature>
<gene>
    <name type="primary">HVG1</name>
    <name type="synonym">YEM9</name>
    <name type="ORF">SCRG_04508</name>
</gene>
<evidence type="ECO:0000250" key="1"/>
<evidence type="ECO:0000255" key="2"/>
<evidence type="ECO:0000305" key="3"/>
<protein>
    <recommendedName>
        <fullName>Probable GDP-mannose transporter 2</fullName>
        <shortName>GMT 2</shortName>
    </recommendedName>
</protein>
<reference key="1">
    <citation type="submission" date="2005-03" db="EMBL/GenBank/DDBJ databases">
        <title>Annotation of the Saccharomyces cerevisiae RM11-1a genome.</title>
        <authorList>
            <consortium name="The Broad Institute Genome Sequencing Platform"/>
            <person name="Birren B.W."/>
            <person name="Lander E.S."/>
            <person name="Galagan J.E."/>
            <person name="Nusbaum C."/>
            <person name="Devon K."/>
            <person name="Cuomo C."/>
            <person name="Jaffe D.B."/>
            <person name="Butler J."/>
            <person name="Alvarez P."/>
            <person name="Gnerre S."/>
            <person name="Grabherr M."/>
            <person name="Kleber M."/>
            <person name="Mauceli E.W."/>
            <person name="Brockman W."/>
            <person name="MacCallum I.A."/>
            <person name="Rounsley S."/>
            <person name="Young S.K."/>
            <person name="LaButti K."/>
            <person name="Pushparaj V."/>
            <person name="DeCaprio D."/>
            <person name="Crawford M."/>
            <person name="Koehrsen M."/>
            <person name="Engels R."/>
            <person name="Montgomery P."/>
            <person name="Pearson M."/>
            <person name="Howarth C."/>
            <person name="Larson L."/>
            <person name="Luoma S."/>
            <person name="White J."/>
            <person name="O'Leary S."/>
            <person name="Kodira C.D."/>
            <person name="Zeng Q."/>
            <person name="Yandava C."/>
            <person name="Alvarado L."/>
            <person name="Pratt S."/>
            <person name="Kruglyak L."/>
        </authorList>
    </citation>
    <scope>NUCLEOTIDE SEQUENCE [LARGE SCALE GENOMIC DNA]</scope>
    <source>
        <strain>RM11-1a</strain>
    </source>
</reference>
<name>GMT2_YEAS1</name>